<feature type="chain" id="PRO_1000137910" description="Undecaprenyl-phosphate 4-deoxy-4-formamido-L-arabinose transferase">
    <location>
        <begin position="1"/>
        <end position="322"/>
    </location>
</feature>
<feature type="topological domain" description="Cytoplasmic" evidence="1">
    <location>
        <begin position="1"/>
        <end position="235"/>
    </location>
</feature>
<feature type="transmembrane region" description="Helical" evidence="1">
    <location>
        <begin position="236"/>
        <end position="256"/>
    </location>
</feature>
<feature type="topological domain" description="Periplasmic" evidence="1">
    <location>
        <begin position="257"/>
        <end position="269"/>
    </location>
</feature>
<feature type="transmembrane region" description="Helical" evidence="1">
    <location>
        <begin position="270"/>
        <end position="290"/>
    </location>
</feature>
<feature type="topological domain" description="Cytoplasmic" evidence="1">
    <location>
        <begin position="291"/>
        <end position="322"/>
    </location>
</feature>
<gene>
    <name evidence="1" type="primary">arnC</name>
    <name type="ordered locus">ECIAI1_2330</name>
</gene>
<organism>
    <name type="scientific">Escherichia coli O8 (strain IAI1)</name>
    <dbReference type="NCBI Taxonomy" id="585034"/>
    <lineage>
        <taxon>Bacteria</taxon>
        <taxon>Pseudomonadati</taxon>
        <taxon>Pseudomonadota</taxon>
        <taxon>Gammaproteobacteria</taxon>
        <taxon>Enterobacterales</taxon>
        <taxon>Enterobacteriaceae</taxon>
        <taxon>Escherichia</taxon>
    </lineage>
</organism>
<reference key="1">
    <citation type="journal article" date="2009" name="PLoS Genet.">
        <title>Organised genome dynamics in the Escherichia coli species results in highly diverse adaptive paths.</title>
        <authorList>
            <person name="Touchon M."/>
            <person name="Hoede C."/>
            <person name="Tenaillon O."/>
            <person name="Barbe V."/>
            <person name="Baeriswyl S."/>
            <person name="Bidet P."/>
            <person name="Bingen E."/>
            <person name="Bonacorsi S."/>
            <person name="Bouchier C."/>
            <person name="Bouvet O."/>
            <person name="Calteau A."/>
            <person name="Chiapello H."/>
            <person name="Clermont O."/>
            <person name="Cruveiller S."/>
            <person name="Danchin A."/>
            <person name="Diard M."/>
            <person name="Dossat C."/>
            <person name="Karoui M.E."/>
            <person name="Frapy E."/>
            <person name="Garry L."/>
            <person name="Ghigo J.M."/>
            <person name="Gilles A.M."/>
            <person name="Johnson J."/>
            <person name="Le Bouguenec C."/>
            <person name="Lescat M."/>
            <person name="Mangenot S."/>
            <person name="Martinez-Jehanne V."/>
            <person name="Matic I."/>
            <person name="Nassif X."/>
            <person name="Oztas S."/>
            <person name="Petit M.A."/>
            <person name="Pichon C."/>
            <person name="Rouy Z."/>
            <person name="Ruf C.S."/>
            <person name="Schneider D."/>
            <person name="Tourret J."/>
            <person name="Vacherie B."/>
            <person name="Vallenet D."/>
            <person name="Medigue C."/>
            <person name="Rocha E.P.C."/>
            <person name="Denamur E."/>
        </authorList>
    </citation>
    <scope>NUCLEOTIDE SEQUENCE [LARGE SCALE GENOMIC DNA]</scope>
    <source>
        <strain>IAI1</strain>
    </source>
</reference>
<keyword id="KW-0046">Antibiotic resistance</keyword>
<keyword id="KW-0997">Cell inner membrane</keyword>
<keyword id="KW-1003">Cell membrane</keyword>
<keyword id="KW-0328">Glycosyltransferase</keyword>
<keyword id="KW-0441">Lipid A biosynthesis</keyword>
<keyword id="KW-0444">Lipid biosynthesis</keyword>
<keyword id="KW-0443">Lipid metabolism</keyword>
<keyword id="KW-0448">Lipopolysaccharide biosynthesis</keyword>
<keyword id="KW-0472">Membrane</keyword>
<keyword id="KW-0808">Transferase</keyword>
<keyword id="KW-0812">Transmembrane</keyword>
<keyword id="KW-1133">Transmembrane helix</keyword>
<dbReference type="EC" id="2.4.2.53" evidence="1"/>
<dbReference type="EMBL" id="CU928160">
    <property type="protein sequence ID" value="CAQ99173.1"/>
    <property type="molecule type" value="Genomic_DNA"/>
</dbReference>
<dbReference type="RefSeq" id="WP_000461661.1">
    <property type="nucleotide sequence ID" value="NC_011741.1"/>
</dbReference>
<dbReference type="SMR" id="B7M5T6"/>
<dbReference type="CAZy" id="GT2">
    <property type="family name" value="Glycosyltransferase Family 2"/>
</dbReference>
<dbReference type="KEGG" id="ecr:ECIAI1_2330"/>
<dbReference type="HOGENOM" id="CLU_033536_0_0_6"/>
<dbReference type="UniPathway" id="UPA00030"/>
<dbReference type="UniPathway" id="UPA00036">
    <property type="reaction ID" value="UER00495"/>
</dbReference>
<dbReference type="GO" id="GO:0005886">
    <property type="term" value="C:plasma membrane"/>
    <property type="evidence" value="ECO:0007669"/>
    <property type="project" value="UniProtKB-SubCell"/>
</dbReference>
<dbReference type="GO" id="GO:0016780">
    <property type="term" value="F:phosphotransferase activity, for other substituted phosphate groups"/>
    <property type="evidence" value="ECO:0007669"/>
    <property type="project" value="UniProtKB-UniRule"/>
</dbReference>
<dbReference type="GO" id="GO:0099621">
    <property type="term" value="F:undecaprenyl-phosphate 4-deoxy-4-formamido-L-arabinose transferase activity"/>
    <property type="evidence" value="ECO:0007669"/>
    <property type="project" value="UniProtKB-EC"/>
</dbReference>
<dbReference type="GO" id="GO:0036108">
    <property type="term" value="P:4-amino-4-deoxy-alpha-L-arabinopyranosyl undecaprenyl phosphate biosynthetic process"/>
    <property type="evidence" value="ECO:0007669"/>
    <property type="project" value="UniProtKB-UniRule"/>
</dbReference>
<dbReference type="GO" id="GO:0009245">
    <property type="term" value="P:lipid A biosynthetic process"/>
    <property type="evidence" value="ECO:0007669"/>
    <property type="project" value="UniProtKB-UniRule"/>
</dbReference>
<dbReference type="GO" id="GO:0009103">
    <property type="term" value="P:lipopolysaccharide biosynthetic process"/>
    <property type="evidence" value="ECO:0007669"/>
    <property type="project" value="UniProtKB-UniRule"/>
</dbReference>
<dbReference type="GO" id="GO:0046677">
    <property type="term" value="P:response to antibiotic"/>
    <property type="evidence" value="ECO:0007669"/>
    <property type="project" value="UniProtKB-KW"/>
</dbReference>
<dbReference type="CDD" id="cd04187">
    <property type="entry name" value="DPM1_like_bac"/>
    <property type="match status" value="1"/>
</dbReference>
<dbReference type="FunFam" id="3.90.550.10:FF:000019">
    <property type="entry name" value="Undecaprenyl-phosphate 4-deoxy-4-formamido-L-arabinose transferase"/>
    <property type="match status" value="1"/>
</dbReference>
<dbReference type="Gene3D" id="3.90.550.10">
    <property type="entry name" value="Spore Coat Polysaccharide Biosynthesis Protein SpsA, Chain A"/>
    <property type="match status" value="1"/>
</dbReference>
<dbReference type="HAMAP" id="MF_01164">
    <property type="entry name" value="ArnC_transfer"/>
    <property type="match status" value="1"/>
</dbReference>
<dbReference type="InterPro" id="IPR022857">
    <property type="entry name" value="ArnC_tfrase"/>
</dbReference>
<dbReference type="InterPro" id="IPR001173">
    <property type="entry name" value="Glyco_trans_2-like"/>
</dbReference>
<dbReference type="InterPro" id="IPR050256">
    <property type="entry name" value="Glycosyltransferase_2"/>
</dbReference>
<dbReference type="InterPro" id="IPR029044">
    <property type="entry name" value="Nucleotide-diphossugar_trans"/>
</dbReference>
<dbReference type="NCBIfam" id="NF007986">
    <property type="entry name" value="PRK10714.1"/>
    <property type="match status" value="1"/>
</dbReference>
<dbReference type="PANTHER" id="PTHR48090:SF3">
    <property type="entry name" value="UNDECAPRENYL-PHOSPHATE 4-DEOXY-4-FORMAMIDO-L-ARABINOSE TRANSFERASE"/>
    <property type="match status" value="1"/>
</dbReference>
<dbReference type="PANTHER" id="PTHR48090">
    <property type="entry name" value="UNDECAPRENYL-PHOSPHATE 4-DEOXY-4-FORMAMIDO-L-ARABINOSE TRANSFERASE-RELATED"/>
    <property type="match status" value="1"/>
</dbReference>
<dbReference type="Pfam" id="PF00535">
    <property type="entry name" value="Glycos_transf_2"/>
    <property type="match status" value="1"/>
</dbReference>
<dbReference type="SUPFAM" id="SSF53448">
    <property type="entry name" value="Nucleotide-diphospho-sugar transferases"/>
    <property type="match status" value="1"/>
</dbReference>
<sequence>MFEIHPVKKVSVVIPVYNEQESLPELIRRTTTACESLGKEYEILLIDDGSSDNSAHMLVEASQAENSHIVSILLNRNYGQHSAIMAGFSHVTGDLIITLDADLQNPPEEIPRLVAKADEGYDVVGTVRQNRQDSWFRKTASKMINRLIQRTTGKAMGDYGCMLRAYRRHIVDAMLHCHERSTFIPILANIFARRAIEIPVHHSEREFGESKYSFMRLINLMYDLVTCLTTTPLRMLSLLGSIIAIGGFSIAVLLVILRLTFGPQWAAEGVFMLFAVLFTFIGAQFIGMGLLGEYIGRIYTDVRARPRYFVQQVIRPSSKENE</sequence>
<accession>B7M5T6</accession>
<protein>
    <recommendedName>
        <fullName evidence="1">Undecaprenyl-phosphate 4-deoxy-4-formamido-L-arabinose transferase</fullName>
        <ecNumber evidence="1">2.4.2.53</ecNumber>
    </recommendedName>
    <alternativeName>
        <fullName evidence="1">Undecaprenyl-phosphate Ara4FN transferase</fullName>
        <shortName evidence="1">Ara4FN transferase</shortName>
    </alternativeName>
</protein>
<evidence type="ECO:0000255" key="1">
    <source>
        <dbReference type="HAMAP-Rule" id="MF_01164"/>
    </source>
</evidence>
<proteinExistence type="inferred from homology"/>
<name>ARNC_ECO8A</name>
<comment type="function">
    <text evidence="1">Catalyzes the transfer of 4-deoxy-4-formamido-L-arabinose from UDP to undecaprenyl phosphate. The modified arabinose is attached to lipid A and is required for resistance to polymyxin and cationic antimicrobial peptides.</text>
</comment>
<comment type="catalytic activity">
    <reaction evidence="1">
        <text>UDP-4-deoxy-4-formamido-beta-L-arabinose + di-trans,octa-cis-undecaprenyl phosphate = 4-deoxy-4-formamido-alpha-L-arabinopyranosyl di-trans,octa-cis-undecaprenyl phosphate + UDP</text>
        <dbReference type="Rhea" id="RHEA:27722"/>
        <dbReference type="ChEBI" id="CHEBI:58223"/>
        <dbReference type="ChEBI" id="CHEBI:58709"/>
        <dbReference type="ChEBI" id="CHEBI:58909"/>
        <dbReference type="ChEBI" id="CHEBI:60392"/>
        <dbReference type="EC" id="2.4.2.53"/>
    </reaction>
</comment>
<comment type="pathway">
    <text evidence="1">Glycolipid biosynthesis; 4-amino-4-deoxy-alpha-L-arabinose undecaprenyl phosphate biosynthesis; 4-amino-4-deoxy-alpha-L-arabinose undecaprenyl phosphate from UDP-4-deoxy-4-formamido-beta-L-arabinose and undecaprenyl phosphate: step 1/2.</text>
</comment>
<comment type="pathway">
    <text evidence="1">Bacterial outer membrane biogenesis; lipopolysaccharide biosynthesis.</text>
</comment>
<comment type="subcellular location">
    <subcellularLocation>
        <location evidence="1">Cell inner membrane</location>
        <topology evidence="1">Multi-pass membrane protein</topology>
    </subcellularLocation>
</comment>
<comment type="similarity">
    <text evidence="1">Belongs to the glycosyltransferase 2 family.</text>
</comment>